<keyword id="KW-0378">Hydrolase</keyword>
<keyword id="KW-0479">Metal-binding</keyword>
<keyword id="KW-0482">Metalloprotease</keyword>
<keyword id="KW-0645">Protease</keyword>
<keyword id="KW-0862">Zinc</keyword>
<protein>
    <recommendedName>
        <fullName>Neutral endopeptidase</fullName>
        <ecNumber>3.4.24.-</ecNumber>
    </recommendedName>
    <alternativeName>
        <fullName>Endopeptidase O</fullName>
    </alternativeName>
</protein>
<gene>
    <name type="primary">pepO</name>
</gene>
<reference key="1">
    <citation type="journal article" date="1998" name="Appl. Environ. Microbiol.">
        <title>Genetic characterization and physiological role of endopeptidase O from Lactobacillus helveticus CNRZ32.</title>
        <authorList>
            <person name="Chen Y.-S."/>
            <person name="Steele J.L."/>
        </authorList>
    </citation>
    <scope>NUCLEOTIDE SEQUENCE [GENOMIC DNA]</scope>
    <source>
        <strain>CNRZ 32</strain>
    </source>
</reference>
<sequence>MRRYLAVRGGAGDVAEPDLNAKPQDNLYLAVNSEWLSKAEIPADQTSAGVNTELDIKIEKRMMKDFADIASGKEKMPDIRDFDKAIALYKIAKNFDKRDAEKANPIQNDLQKILDLINFDKFKDNATELFMGPYALPFVFDVDADMKNTDFNVLHFGGPSTFLPDTTTYKTPEAKKLLDILEKQSINLLEMAGIGKEEARVYVQNALAFDQKLSKVVKSTEEWSDYAAIYNPVSLTEFLAKFKSFDMADFLKTILPEKVERVIVMEPRFLDHADELINPANFDEIKGWMLVKYINSVAKYLSQDFRAAAFPFNQAISGTPELPSQIKQAYRLANGAFDEAVGIFYGKKYFGEEAKHDVEDMIHNMLKVYEQRINDNNWLSEDTKKKAIIKLRALVLKIGYPEKIEKIYDLLQIDPERSLYENEAQMATVRTKYMLDKLTQPVDRSVWLMPGNLNNACYDPQRNDLTFPAGILQAPFYDIHQSRGANYGGIGATIGHEVSHAFDNSGAKFDEHGNMNNWWTDEDFAEFNKRVGQMVDIFDGLQYGPAKINGKQVVGENIADLAGLACAVQAGKNDNVDLKDLFENYARSWMQKQRPEAIKTEVQVDVHAPQPTRVNIPVQCQDDFYTAFDVKPDDGMWLDPEDRITIW</sequence>
<organism>
    <name type="scientific">Lactobacillus helveticus</name>
    <name type="common">Lactobacillus suntoryeus</name>
    <dbReference type="NCBI Taxonomy" id="1587"/>
    <lineage>
        <taxon>Bacteria</taxon>
        <taxon>Bacillati</taxon>
        <taxon>Bacillota</taxon>
        <taxon>Bacilli</taxon>
        <taxon>Lactobacillales</taxon>
        <taxon>Lactobacillaceae</taxon>
        <taxon>Lactobacillus</taxon>
    </lineage>
</organism>
<evidence type="ECO:0000250" key="1"/>
<evidence type="ECO:0000255" key="2">
    <source>
        <dbReference type="PROSITE-ProRule" id="PRU01233"/>
    </source>
</evidence>
<evidence type="ECO:0000255" key="3">
    <source>
        <dbReference type="PROSITE-ProRule" id="PRU10095"/>
    </source>
</evidence>
<evidence type="ECO:0000305" key="4"/>
<dbReference type="EC" id="3.4.24.-"/>
<dbReference type="EMBL" id="AF019410">
    <property type="protein sequence ID" value="AAC35997.1"/>
    <property type="molecule type" value="Genomic_DNA"/>
</dbReference>
<dbReference type="RefSeq" id="WP_003629024.1">
    <property type="nucleotide sequence ID" value="NZ_SKBC01000037.1"/>
</dbReference>
<dbReference type="SMR" id="O52071"/>
<dbReference type="MEROPS" id="M13.010"/>
<dbReference type="eggNOG" id="COG3590">
    <property type="taxonomic scope" value="Bacteria"/>
</dbReference>
<dbReference type="GO" id="GO:0005886">
    <property type="term" value="C:plasma membrane"/>
    <property type="evidence" value="ECO:0007669"/>
    <property type="project" value="TreeGrafter"/>
</dbReference>
<dbReference type="GO" id="GO:0046872">
    <property type="term" value="F:metal ion binding"/>
    <property type="evidence" value="ECO:0007669"/>
    <property type="project" value="UniProtKB-KW"/>
</dbReference>
<dbReference type="GO" id="GO:0004222">
    <property type="term" value="F:metalloendopeptidase activity"/>
    <property type="evidence" value="ECO:0007669"/>
    <property type="project" value="InterPro"/>
</dbReference>
<dbReference type="GO" id="GO:0016485">
    <property type="term" value="P:protein processing"/>
    <property type="evidence" value="ECO:0007669"/>
    <property type="project" value="TreeGrafter"/>
</dbReference>
<dbReference type="CDD" id="cd08662">
    <property type="entry name" value="M13"/>
    <property type="match status" value="1"/>
</dbReference>
<dbReference type="Gene3D" id="3.40.390.10">
    <property type="entry name" value="Collagenase (Catalytic Domain)"/>
    <property type="match status" value="1"/>
</dbReference>
<dbReference type="Gene3D" id="1.10.1380.10">
    <property type="entry name" value="Neutral endopeptidase , domain2"/>
    <property type="match status" value="1"/>
</dbReference>
<dbReference type="InterPro" id="IPR024079">
    <property type="entry name" value="MetalloPept_cat_dom_sf"/>
</dbReference>
<dbReference type="InterPro" id="IPR000718">
    <property type="entry name" value="Peptidase_M13"/>
</dbReference>
<dbReference type="InterPro" id="IPR018497">
    <property type="entry name" value="Peptidase_M13_C"/>
</dbReference>
<dbReference type="InterPro" id="IPR042089">
    <property type="entry name" value="Peptidase_M13_dom_2"/>
</dbReference>
<dbReference type="InterPro" id="IPR008753">
    <property type="entry name" value="Peptidase_M13_N"/>
</dbReference>
<dbReference type="PANTHER" id="PTHR11733:SF167">
    <property type="entry name" value="FI17812P1-RELATED"/>
    <property type="match status" value="1"/>
</dbReference>
<dbReference type="PANTHER" id="PTHR11733">
    <property type="entry name" value="ZINC METALLOPROTEASE FAMILY M13 NEPRILYSIN-RELATED"/>
    <property type="match status" value="1"/>
</dbReference>
<dbReference type="Pfam" id="PF01431">
    <property type="entry name" value="Peptidase_M13"/>
    <property type="match status" value="1"/>
</dbReference>
<dbReference type="Pfam" id="PF05649">
    <property type="entry name" value="Peptidase_M13_N"/>
    <property type="match status" value="1"/>
</dbReference>
<dbReference type="PRINTS" id="PR00786">
    <property type="entry name" value="NEPRILYSIN"/>
</dbReference>
<dbReference type="SUPFAM" id="SSF55486">
    <property type="entry name" value="Metalloproteases ('zincins'), catalytic domain"/>
    <property type="match status" value="1"/>
</dbReference>
<dbReference type="PROSITE" id="PS51885">
    <property type="entry name" value="NEPRILYSIN"/>
    <property type="match status" value="1"/>
</dbReference>
<dbReference type="PROSITE" id="PS00142">
    <property type="entry name" value="ZINC_PROTEASE"/>
    <property type="match status" value="1"/>
</dbReference>
<proteinExistence type="inferred from homology"/>
<name>PEPO_LACHE</name>
<feature type="chain" id="PRO_0000078232" description="Neutral endopeptidase">
    <location>
        <begin position="1"/>
        <end position="647"/>
    </location>
</feature>
<feature type="domain" description="Peptidase M13" evidence="2">
    <location>
        <begin position="1"/>
        <end position="647"/>
    </location>
</feature>
<feature type="active site" evidence="2 3">
    <location>
        <position position="497"/>
    </location>
</feature>
<feature type="active site" description="Proton donor" evidence="2">
    <location>
        <position position="560"/>
    </location>
</feature>
<feature type="binding site" evidence="2 3">
    <location>
        <position position="496"/>
    </location>
    <ligand>
        <name>Zn(2+)</name>
        <dbReference type="ChEBI" id="CHEBI:29105"/>
        <note>catalytic</note>
    </ligand>
</feature>
<feature type="binding site" evidence="2 3">
    <location>
        <position position="500"/>
    </location>
    <ligand>
        <name>Zn(2+)</name>
        <dbReference type="ChEBI" id="CHEBI:29105"/>
        <note>catalytic</note>
    </ligand>
</feature>
<feature type="binding site" evidence="2">
    <location>
        <position position="556"/>
    </location>
    <ligand>
        <name>Zn(2+)</name>
        <dbReference type="ChEBI" id="CHEBI:29105"/>
        <note>catalytic</note>
    </ligand>
</feature>
<comment type="cofactor">
    <cofactor evidence="1">
        <name>Zn(2+)</name>
        <dbReference type="ChEBI" id="CHEBI:29105"/>
    </cofactor>
    <text evidence="1">Binds 1 zinc ion per subunit.</text>
</comment>
<comment type="similarity">
    <text evidence="2 4">Belongs to the peptidase M13 family.</text>
</comment>
<accession>O52071</accession>